<sequence>MKWLKQLQSLHTKLVIVYVLLIIIGMQIIGLYFTNNLEKELLDNFKKNITQYAKQLEISIEKVYDEKGSVNAQKDIQNLLSEYANRQEIGEIRFIDKDQIIIATTKQSNRSLINQKANDSSVQKALSLGQSNDHLILKDYGGGKDRVWVYNIPVKVDKKVIGNIYIESKINDVYNQLNNINQIFIVGTAISLLITVILGFFIARTITKPITDMRNQTVEMSRGNYTQRVKIYGNDEIGELALAFNNLSKRVQEAQANTESEKRRLDSVITHMSDGIIATDRRGRIRIVNDMALKMLGMAKEDIIGYYMLSVLSLEDEFKLEEIQENNDSFLLDLNEEEGLIARVNFSTIVQETGFVTGYIAVLHDVTEQQQVERERREFVANVSHELRTPLTSMNSYIEALEEGAWKDEELAPQFLSVTREETERMIRLVNDLLQLSKMDNESDQINKEIIDFNMFINKIINRHEMSAKDTTFIRDIPKKTIFTEFDPDKMTQVFDNVITNAMKYSRGDKRVEFHVKQNPLYNRMTIRIKDNGIGIPINKVDKIFDRFYRVDKARTRKMGGTGLGLAISKEIVEAHNGRIWANSVEGQGTSIFITLPCEVIEDGDWDE</sequence>
<name>WALK_STAA9</name>
<organism>
    <name type="scientific">Staphylococcus aureus (strain JH9)</name>
    <dbReference type="NCBI Taxonomy" id="359786"/>
    <lineage>
        <taxon>Bacteria</taxon>
        <taxon>Bacillati</taxon>
        <taxon>Bacillota</taxon>
        <taxon>Bacilli</taxon>
        <taxon>Bacillales</taxon>
        <taxon>Staphylococcaceae</taxon>
        <taxon>Staphylococcus</taxon>
    </lineage>
</organism>
<feature type="chain" id="PRO_0000353054" description="Sensor protein kinase WalK">
    <location>
        <begin position="1"/>
        <end position="608"/>
    </location>
</feature>
<feature type="transmembrane region" description="Helical" evidence="4">
    <location>
        <begin position="14"/>
        <end position="34"/>
    </location>
</feature>
<feature type="transmembrane region" description="Helical" evidence="4">
    <location>
        <begin position="183"/>
        <end position="203"/>
    </location>
</feature>
<feature type="domain" description="HAMP" evidence="5">
    <location>
        <begin position="204"/>
        <end position="256"/>
    </location>
</feature>
<feature type="domain" description="PAS" evidence="7">
    <location>
        <begin position="261"/>
        <end position="331"/>
    </location>
</feature>
<feature type="domain" description="PAC" evidence="8">
    <location>
        <begin position="314"/>
        <end position="378"/>
    </location>
</feature>
<feature type="domain" description="Histidine kinase" evidence="6">
    <location>
        <begin position="382"/>
        <end position="600"/>
    </location>
</feature>
<feature type="binding site" evidence="3">
    <location>
        <position position="271"/>
    </location>
    <ligand>
        <name>Zn(2+)</name>
        <dbReference type="ChEBI" id="CHEBI:29105"/>
    </ligand>
</feature>
<feature type="binding site" evidence="3">
    <location>
        <position position="274"/>
    </location>
    <ligand>
        <name>Zn(2+)</name>
        <dbReference type="ChEBI" id="CHEBI:29105"/>
    </ligand>
</feature>
<feature type="binding site" evidence="3">
    <location>
        <position position="364"/>
    </location>
    <ligand>
        <name>Zn(2+)</name>
        <dbReference type="ChEBI" id="CHEBI:29105"/>
    </ligand>
</feature>
<feature type="binding site" evidence="3">
    <location>
        <position position="368"/>
    </location>
    <ligand>
        <name>Zn(2+)</name>
        <dbReference type="ChEBI" id="CHEBI:29105"/>
    </ligand>
</feature>
<feature type="modified residue" description="Phosphohistidine; by autocatalysis" evidence="6">
    <location>
        <position position="385"/>
    </location>
</feature>
<keyword id="KW-0067">ATP-binding</keyword>
<keyword id="KW-1003">Cell membrane</keyword>
<keyword id="KW-0418">Kinase</keyword>
<keyword id="KW-0472">Membrane</keyword>
<keyword id="KW-0479">Metal-binding</keyword>
<keyword id="KW-0547">Nucleotide-binding</keyword>
<keyword id="KW-0597">Phosphoprotein</keyword>
<keyword id="KW-0808">Transferase</keyword>
<keyword id="KW-0812">Transmembrane</keyword>
<keyword id="KW-1133">Transmembrane helix</keyword>
<keyword id="KW-0902">Two-component regulatory system</keyword>
<keyword id="KW-0862">Zinc</keyword>
<reference key="1">
    <citation type="submission" date="2007-05" db="EMBL/GenBank/DDBJ databases">
        <title>Complete sequence of chromosome of Staphylococcus aureus subsp. aureus JH9.</title>
        <authorList>
            <consortium name="US DOE Joint Genome Institute"/>
            <person name="Copeland A."/>
            <person name="Lucas S."/>
            <person name="Lapidus A."/>
            <person name="Barry K."/>
            <person name="Detter J.C."/>
            <person name="Glavina del Rio T."/>
            <person name="Hammon N."/>
            <person name="Israni S."/>
            <person name="Pitluck S."/>
            <person name="Chain P."/>
            <person name="Malfatti S."/>
            <person name="Shin M."/>
            <person name="Vergez L."/>
            <person name="Schmutz J."/>
            <person name="Larimer F."/>
            <person name="Land M."/>
            <person name="Hauser L."/>
            <person name="Kyrpides N."/>
            <person name="Kim E."/>
            <person name="Tomasz A."/>
            <person name="Richardson P."/>
        </authorList>
    </citation>
    <scope>NUCLEOTIDE SEQUENCE [LARGE SCALE GENOMIC DNA]</scope>
    <source>
        <strain>JH9</strain>
    </source>
</reference>
<evidence type="ECO:0000250" key="1">
    <source>
        <dbReference type="UniProtKB" id="O34206"/>
    </source>
</evidence>
<evidence type="ECO:0000250" key="2">
    <source>
        <dbReference type="UniProtKB" id="Q2G2U4"/>
    </source>
</evidence>
<evidence type="ECO:0000250" key="3">
    <source>
        <dbReference type="UniProtKB" id="Q9RDT3"/>
    </source>
</evidence>
<evidence type="ECO:0000255" key="4"/>
<evidence type="ECO:0000255" key="5">
    <source>
        <dbReference type="PROSITE-ProRule" id="PRU00102"/>
    </source>
</evidence>
<evidence type="ECO:0000255" key="6">
    <source>
        <dbReference type="PROSITE-ProRule" id="PRU00107"/>
    </source>
</evidence>
<evidence type="ECO:0000255" key="7">
    <source>
        <dbReference type="PROSITE-ProRule" id="PRU00140"/>
    </source>
</evidence>
<evidence type="ECO:0000255" key="8">
    <source>
        <dbReference type="PROSITE-ProRule" id="PRU00141"/>
    </source>
</evidence>
<evidence type="ECO:0000305" key="9"/>
<dbReference type="EC" id="2.7.13.3" evidence="1"/>
<dbReference type="EMBL" id="CP000703">
    <property type="protein sequence ID" value="ABQ47833.1"/>
    <property type="molecule type" value="Genomic_DNA"/>
</dbReference>
<dbReference type="RefSeq" id="WP_000871607.1">
    <property type="nucleotide sequence ID" value="NC_009487.1"/>
</dbReference>
<dbReference type="SMR" id="A5INR0"/>
<dbReference type="KEGG" id="saj:SaurJH9_0019"/>
<dbReference type="HOGENOM" id="CLU_000445_89_2_9"/>
<dbReference type="GO" id="GO:0005886">
    <property type="term" value="C:plasma membrane"/>
    <property type="evidence" value="ECO:0007669"/>
    <property type="project" value="UniProtKB-SubCell"/>
</dbReference>
<dbReference type="GO" id="GO:0005524">
    <property type="term" value="F:ATP binding"/>
    <property type="evidence" value="ECO:0007669"/>
    <property type="project" value="UniProtKB-KW"/>
</dbReference>
<dbReference type="GO" id="GO:0046872">
    <property type="term" value="F:metal ion binding"/>
    <property type="evidence" value="ECO:0007669"/>
    <property type="project" value="UniProtKB-KW"/>
</dbReference>
<dbReference type="GO" id="GO:0000156">
    <property type="term" value="F:phosphorelay response regulator activity"/>
    <property type="evidence" value="ECO:0007669"/>
    <property type="project" value="TreeGrafter"/>
</dbReference>
<dbReference type="GO" id="GO:0000155">
    <property type="term" value="F:phosphorelay sensor kinase activity"/>
    <property type="evidence" value="ECO:0007669"/>
    <property type="project" value="InterPro"/>
</dbReference>
<dbReference type="GO" id="GO:0030295">
    <property type="term" value="F:protein kinase activator activity"/>
    <property type="evidence" value="ECO:0007669"/>
    <property type="project" value="TreeGrafter"/>
</dbReference>
<dbReference type="GO" id="GO:0007234">
    <property type="term" value="P:osmosensory signaling via phosphorelay pathway"/>
    <property type="evidence" value="ECO:0007669"/>
    <property type="project" value="TreeGrafter"/>
</dbReference>
<dbReference type="CDD" id="cd06225">
    <property type="entry name" value="HAMP"/>
    <property type="match status" value="1"/>
</dbReference>
<dbReference type="CDD" id="cd00075">
    <property type="entry name" value="HATPase"/>
    <property type="match status" value="1"/>
</dbReference>
<dbReference type="CDD" id="cd00082">
    <property type="entry name" value="HisKA"/>
    <property type="match status" value="1"/>
</dbReference>
<dbReference type="CDD" id="cd00130">
    <property type="entry name" value="PAS"/>
    <property type="match status" value="1"/>
</dbReference>
<dbReference type="FunFam" id="1.10.8.500:FF:000001">
    <property type="entry name" value="Cell wall metabolism sensor histidine kinase"/>
    <property type="match status" value="1"/>
</dbReference>
<dbReference type="FunFam" id="3.30.450.20:FF:000037">
    <property type="entry name" value="Cell wall metabolism sensor histidine kinase"/>
    <property type="match status" value="1"/>
</dbReference>
<dbReference type="FunFam" id="3.30.565.10:FF:000006">
    <property type="entry name" value="Sensor histidine kinase WalK"/>
    <property type="match status" value="1"/>
</dbReference>
<dbReference type="FunFam" id="1.10.287.130:FF:000001">
    <property type="entry name" value="Two-component sensor histidine kinase"/>
    <property type="match status" value="1"/>
</dbReference>
<dbReference type="Gene3D" id="1.10.287.130">
    <property type="match status" value="1"/>
</dbReference>
<dbReference type="Gene3D" id="1.10.8.500">
    <property type="entry name" value="HAMP domain in histidine kinase"/>
    <property type="match status" value="1"/>
</dbReference>
<dbReference type="Gene3D" id="3.30.565.10">
    <property type="entry name" value="Histidine kinase-like ATPase, C-terminal domain"/>
    <property type="match status" value="1"/>
</dbReference>
<dbReference type="Gene3D" id="3.30.450.20">
    <property type="entry name" value="PAS domain"/>
    <property type="match status" value="2"/>
</dbReference>
<dbReference type="InterPro" id="IPR003660">
    <property type="entry name" value="HAMP_dom"/>
</dbReference>
<dbReference type="InterPro" id="IPR036890">
    <property type="entry name" value="HATPase_C_sf"/>
</dbReference>
<dbReference type="InterPro" id="IPR005467">
    <property type="entry name" value="His_kinase_dom"/>
</dbReference>
<dbReference type="InterPro" id="IPR003661">
    <property type="entry name" value="HisK_dim/P_dom"/>
</dbReference>
<dbReference type="InterPro" id="IPR036097">
    <property type="entry name" value="HisK_dim/P_sf"/>
</dbReference>
<dbReference type="InterPro" id="IPR052545">
    <property type="entry name" value="Light-responsive_reg"/>
</dbReference>
<dbReference type="InterPro" id="IPR000014">
    <property type="entry name" value="PAS"/>
</dbReference>
<dbReference type="InterPro" id="IPR000700">
    <property type="entry name" value="PAS-assoc_C"/>
</dbReference>
<dbReference type="InterPro" id="IPR035965">
    <property type="entry name" value="PAS-like_dom_sf"/>
</dbReference>
<dbReference type="InterPro" id="IPR049814">
    <property type="entry name" value="Resp_reg_WalK"/>
</dbReference>
<dbReference type="InterPro" id="IPR029151">
    <property type="entry name" value="Sensor-like_sf"/>
</dbReference>
<dbReference type="InterPro" id="IPR004358">
    <property type="entry name" value="Sig_transdc_His_kin-like_C"/>
</dbReference>
<dbReference type="NCBIfam" id="NF033092">
    <property type="entry name" value="HK_WalK"/>
    <property type="match status" value="1"/>
</dbReference>
<dbReference type="NCBIfam" id="TIGR00229">
    <property type="entry name" value="sensory_box"/>
    <property type="match status" value="1"/>
</dbReference>
<dbReference type="PANTHER" id="PTHR42878:SF7">
    <property type="entry name" value="SENSOR HISTIDINE KINASE GLRK"/>
    <property type="match status" value="1"/>
</dbReference>
<dbReference type="PANTHER" id="PTHR42878">
    <property type="entry name" value="TWO-COMPONENT HISTIDINE KINASE"/>
    <property type="match status" value="1"/>
</dbReference>
<dbReference type="Pfam" id="PF23846">
    <property type="entry name" value="Cache_WalK"/>
    <property type="match status" value="1"/>
</dbReference>
<dbReference type="Pfam" id="PF00672">
    <property type="entry name" value="HAMP"/>
    <property type="match status" value="1"/>
</dbReference>
<dbReference type="Pfam" id="PF02518">
    <property type="entry name" value="HATPase_c"/>
    <property type="match status" value="1"/>
</dbReference>
<dbReference type="Pfam" id="PF00512">
    <property type="entry name" value="HisKA"/>
    <property type="match status" value="1"/>
</dbReference>
<dbReference type="Pfam" id="PF13426">
    <property type="entry name" value="PAS_9"/>
    <property type="match status" value="1"/>
</dbReference>
<dbReference type="PRINTS" id="PR00344">
    <property type="entry name" value="BCTRLSENSOR"/>
</dbReference>
<dbReference type="SMART" id="SM00304">
    <property type="entry name" value="HAMP"/>
    <property type="match status" value="1"/>
</dbReference>
<dbReference type="SMART" id="SM00387">
    <property type="entry name" value="HATPase_c"/>
    <property type="match status" value="1"/>
</dbReference>
<dbReference type="SMART" id="SM00388">
    <property type="entry name" value="HisKA"/>
    <property type="match status" value="1"/>
</dbReference>
<dbReference type="SMART" id="SM00091">
    <property type="entry name" value="PAS"/>
    <property type="match status" value="1"/>
</dbReference>
<dbReference type="SUPFAM" id="SSF55874">
    <property type="entry name" value="ATPase domain of HSP90 chaperone/DNA topoisomerase II/histidine kinase"/>
    <property type="match status" value="1"/>
</dbReference>
<dbReference type="SUPFAM" id="SSF158472">
    <property type="entry name" value="HAMP domain-like"/>
    <property type="match status" value="1"/>
</dbReference>
<dbReference type="SUPFAM" id="SSF47384">
    <property type="entry name" value="Homodimeric domain of signal transducing histidine kinase"/>
    <property type="match status" value="1"/>
</dbReference>
<dbReference type="SUPFAM" id="SSF55785">
    <property type="entry name" value="PYP-like sensor domain (PAS domain)"/>
    <property type="match status" value="1"/>
</dbReference>
<dbReference type="SUPFAM" id="SSF103190">
    <property type="entry name" value="Sensory domain-like"/>
    <property type="match status" value="1"/>
</dbReference>
<dbReference type="PROSITE" id="PS50885">
    <property type="entry name" value="HAMP"/>
    <property type="match status" value="1"/>
</dbReference>
<dbReference type="PROSITE" id="PS50109">
    <property type="entry name" value="HIS_KIN"/>
    <property type="match status" value="1"/>
</dbReference>
<dbReference type="PROSITE" id="PS50113">
    <property type="entry name" value="PAC"/>
    <property type="match status" value="1"/>
</dbReference>
<dbReference type="PROSITE" id="PS50112">
    <property type="entry name" value="PAS"/>
    <property type="match status" value="1"/>
</dbReference>
<protein>
    <recommendedName>
        <fullName evidence="9">Sensor protein kinase WalK</fullName>
        <ecNumber evidence="1">2.7.13.3</ecNumber>
    </recommendedName>
</protein>
<gene>
    <name type="primary">walK</name>
    <name type="ordered locus">SaurJH9_0019</name>
</gene>
<comment type="function">
    <text evidence="3">Member of the two-component regulatory system WalK/WalR that regulates genes involved in cell wall metabolism, virulence regulation, biofilm production, oxidative stress resistance and antibiotic resistance via direct or indirect regulation of autolysins. Functions as a sensor protein kinase which is autophosphorylated at a histidine residue in the dimerization domain and transfers its phosphate group to the conserved aspartic acid residue in the regulatory domain of WalR. In turn, WalR binds to the upstream promoter regions of the target genes to positively and negatively regulate their expression.</text>
</comment>
<comment type="catalytic activity">
    <reaction evidence="3">
        <text>ATP + protein L-histidine = ADP + protein N-phospho-L-histidine.</text>
        <dbReference type="EC" id="2.7.13.3"/>
    </reaction>
</comment>
<comment type="activity regulation">
    <text evidence="3">By zinc. Zinc-binding negatively regulates WalK kinase activity and thus autophosphorylation.</text>
</comment>
<comment type="subunit">
    <text evidence="2">Forms homodimers. Forms homooligomers.</text>
</comment>
<comment type="subcellular location">
    <subcellularLocation>
        <location evidence="9">Cell membrane</location>
        <topology evidence="4">Multi-pass membrane protein</topology>
    </subcellularLocation>
</comment>
<comment type="PTM">
    <text evidence="3">Autophosphorylated.</text>
</comment>
<accession>A5INR0</accession>
<proteinExistence type="inferred from homology"/>